<organism>
    <name type="scientific">Arabidopsis thaliana</name>
    <name type="common">Mouse-ear cress</name>
    <dbReference type="NCBI Taxonomy" id="3702"/>
    <lineage>
        <taxon>Eukaryota</taxon>
        <taxon>Viridiplantae</taxon>
        <taxon>Streptophyta</taxon>
        <taxon>Embryophyta</taxon>
        <taxon>Tracheophyta</taxon>
        <taxon>Spermatophyta</taxon>
        <taxon>Magnoliopsida</taxon>
        <taxon>eudicotyledons</taxon>
        <taxon>Gunneridae</taxon>
        <taxon>Pentapetalae</taxon>
        <taxon>rosids</taxon>
        <taxon>malvids</taxon>
        <taxon>Brassicales</taxon>
        <taxon>Brassicaceae</taxon>
        <taxon>Camelineae</taxon>
        <taxon>Arabidopsis</taxon>
    </lineage>
</organism>
<proteinExistence type="evidence at protein level"/>
<keyword id="KW-0002">3D-structure</keyword>
<keyword id="KW-0938">Abscisic acid signaling pathway</keyword>
<keyword id="KW-1003">Cell membrane</keyword>
<keyword id="KW-0963">Cytoplasm</keyword>
<keyword id="KW-0472">Membrane</keyword>
<keyword id="KW-0539">Nucleus</keyword>
<keyword id="KW-0650">Protein phosphatase inhibitor</keyword>
<keyword id="KW-0675">Receptor</keyword>
<keyword id="KW-1185">Reference proteome</keyword>
<sequence>MNLAPIHDPSSSSTTTTSSSTPYGLTKDEFSTLDSIIRTHHTFPRSPNTCTSLIAHRVDAPAHAIWRFVRDFANPNKYKHFIKSCTIRVNGNGIKEIKVGTIREVSVVSGLPASTSVEILEVLDEEKRILSFRVLGGEHRLNNYRSVTSVNEFVVLEKDKKKRVYSVVLESYIVDIPQGNTEEDTRMFVDTVVKSNLQNLAVISTASPT</sequence>
<comment type="function">
    <text evidence="10 11 12">Receptor for abscisic acid (ABA) required for ABA-mediated responses such as stomatal closure and germination inhibition. Inhibits the activity of group-A protein phosphatases type 2C (PP2Cs) when activated by ABA (PubMed:21658606, PubMed:22579247, PubMed:23844015). Can be activated by both (-)-ABA and (+)-ABA (PubMed:23844015).</text>
</comment>
<comment type="subunit">
    <text evidence="1 8 9 10 11 12">Homodimer and monomer (PubMed:21658606). Binds ABA on one subunit only. ABA-binding favors monomer and trans-homodimer intermediate, and increases PP2C inhibitor activity (PubMed:22579247, PubMed:23844015). Binds both (-)-ABA and (+)-ABA (PubMed:23844015). Binds to CARs protein in an ABA-independent manner, both at the plasma membrane and in the nucleus (By similarity). Interacts with HAB1, ABI1 and ABI2, and possibly with other PP2Cs (PubMed:19407142, PubMed:19898420, PubMed:22579247, PubMed:23844015).</text>
</comment>
<comment type="interaction">
    <interactant intactId="EBI-2363144">
        <id>Q9SSM7</id>
    </interactant>
    <interactant intactId="EBI-782526">
        <id>P49597</id>
        <label>ABI1</label>
    </interactant>
    <organismsDiffer>false</organismsDiffer>
    <experiments>5</experiments>
</comment>
<comment type="interaction">
    <interactant intactId="EBI-2363144">
        <id>Q9SSM7</id>
    </interactant>
    <interactant intactId="EBI-15803514">
        <id>O04719-1</id>
        <label>ABI2</label>
    </interactant>
    <organismsDiffer>false</organismsDiffer>
    <experiments>2</experiments>
</comment>
<comment type="interaction">
    <interactant intactId="EBI-2363144">
        <id>Q9SSM7</id>
    </interactant>
    <interactant intactId="EBI-1573499">
        <id>Q9LNW3</id>
        <label>AIP1</label>
    </interactant>
    <organismsDiffer>false</organismsDiffer>
    <experiments>3</experiments>
</comment>
<comment type="interaction">
    <interactant intactId="EBI-2363144">
        <id>Q9SSM7</id>
    </interactant>
    <interactant intactId="EBI-4441103">
        <id>Q9ZW21</id>
        <label>At2g29380</label>
    </interactant>
    <organismsDiffer>false</organismsDiffer>
    <experiments>3</experiments>
</comment>
<comment type="interaction">
    <interactant intactId="EBI-2363144">
        <id>Q9SSM7</id>
    </interactant>
    <interactant intactId="EBI-2309302">
        <id>Q9CAJ0</id>
        <label>HAB1</label>
    </interactant>
    <organismsDiffer>false</organismsDiffer>
    <experiments>10</experiments>
</comment>
<comment type="interaction">
    <interactant intactId="EBI-2363144">
        <id>Q9SSM7</id>
    </interactant>
    <interactant intactId="EBI-2363144">
        <id>Q9SSM7</id>
        <label>PYL3</label>
    </interactant>
    <organismsDiffer>false</organismsDiffer>
    <experiments>8</experiments>
</comment>
<comment type="interaction">
    <interactant intactId="EBI-2363144">
        <id>Q9SSM7</id>
    </interactant>
    <interactant intactId="EBI-4426178">
        <id>Q9LT89</id>
        <label>TCP19</label>
    </interactant>
    <organismsDiffer>false</organismsDiffer>
    <experiments>3</experiments>
</comment>
<comment type="subcellular location">
    <subcellularLocation>
        <location evidence="6">Cytoplasm</location>
    </subcellularLocation>
    <subcellularLocation>
        <location evidence="1">Nucleus</location>
    </subcellularLocation>
    <subcellularLocation>
        <location evidence="1">Cell membrane</location>
    </subcellularLocation>
    <text evidence="2">Localizes at the plasma membrane in the presence of a CAR protein.</text>
</comment>
<comment type="domain">
    <text evidence="3">Upon interaction with ABA, the 'latch' and 'gate' loops change in conformation leading to a tight dimerization and the creation a surface that enables the receptor to dock into and inhibit the PP2C active site.</text>
</comment>
<comment type="miscellaneous">
    <text evidence="11">The synthetic growth inhibitor pyrabactin inhibits ABA-binding and subsequent PP2Cs inhibitor properties.</text>
</comment>
<comment type="similarity">
    <text evidence="13">Belongs to the PYR/PYL/RCAR abscisic acid intracellular receptor family.</text>
</comment>
<comment type="sequence caution" evidence="13">
    <conflict type="miscellaneous discrepancy">
        <sequence resource="EMBL-CDS" id="AAU44430"/>
    </conflict>
    <text>Probable cloning artifact.</text>
</comment>
<protein>
    <recommendedName>
        <fullName>Abscisic acid receptor PYL3</fullName>
    </recommendedName>
    <alternativeName>
        <fullName>PYR1-like protein 3</fullName>
    </alternativeName>
    <alternativeName>
        <fullName>Regulatory components of ABA receptor 13</fullName>
    </alternativeName>
</protein>
<evidence type="ECO:0000250" key="1">
    <source>
        <dbReference type="UniProtKB" id="O49686"/>
    </source>
</evidence>
<evidence type="ECO:0000250" key="2">
    <source>
        <dbReference type="UniProtKB" id="O80920"/>
    </source>
</evidence>
<evidence type="ECO:0000250" key="3">
    <source>
        <dbReference type="UniProtKB" id="O80992"/>
    </source>
</evidence>
<evidence type="ECO:0000250" key="4">
    <source>
        <dbReference type="UniProtKB" id="Q84MC7"/>
    </source>
</evidence>
<evidence type="ECO:0000250" key="5">
    <source>
        <dbReference type="UniProtKB" id="Q8VZS8"/>
    </source>
</evidence>
<evidence type="ECO:0000250" key="6">
    <source>
        <dbReference type="UniProtKB" id="Q9FLB1"/>
    </source>
</evidence>
<evidence type="ECO:0000256" key="7">
    <source>
        <dbReference type="SAM" id="MobiDB-lite"/>
    </source>
</evidence>
<evidence type="ECO:0000269" key="8">
    <source>
    </source>
</evidence>
<evidence type="ECO:0000269" key="9">
    <source>
    </source>
</evidence>
<evidence type="ECO:0000269" key="10">
    <source>
    </source>
</evidence>
<evidence type="ECO:0000269" key="11">
    <source>
    </source>
</evidence>
<evidence type="ECO:0000269" key="12">
    <source>
    </source>
</evidence>
<evidence type="ECO:0000305" key="13"/>
<evidence type="ECO:0007744" key="14">
    <source>
        <dbReference type="PDB" id="4DS8"/>
    </source>
</evidence>
<evidence type="ECO:0007744" key="15">
    <source>
        <dbReference type="PDB" id="4DSB"/>
    </source>
</evidence>
<evidence type="ECO:0007744" key="16">
    <source>
        <dbReference type="PDB" id="4DSC"/>
    </source>
</evidence>
<evidence type="ECO:0007744" key="17">
    <source>
        <dbReference type="PDB" id="4JDA"/>
    </source>
</evidence>
<evidence type="ECO:0007829" key="18">
    <source>
        <dbReference type="PDB" id="3KLX"/>
    </source>
</evidence>
<evidence type="ECO:0007829" key="19">
    <source>
        <dbReference type="PDB" id="3OJI"/>
    </source>
</evidence>
<evidence type="ECO:0007829" key="20">
    <source>
        <dbReference type="PDB" id="5JO2"/>
    </source>
</evidence>
<name>PYL3_ARATH</name>
<dbReference type="EMBL" id="AC008017">
    <property type="protein sequence ID" value="AAD55647.1"/>
    <property type="molecule type" value="Genomic_DNA"/>
</dbReference>
<dbReference type="EMBL" id="CP002684">
    <property type="protein sequence ID" value="AEE35402.1"/>
    <property type="molecule type" value="Genomic_DNA"/>
</dbReference>
<dbReference type="EMBL" id="AY924726">
    <property type="protein sequence ID" value="AAX23801.1"/>
    <property type="molecule type" value="Genomic_DNA"/>
</dbReference>
<dbReference type="EMBL" id="AY735560">
    <property type="protein sequence ID" value="AAU44430.1"/>
    <property type="status" value="ALT_SEQ"/>
    <property type="molecule type" value="mRNA"/>
</dbReference>
<dbReference type="PIR" id="D96755">
    <property type="entry name" value="D96755"/>
</dbReference>
<dbReference type="RefSeq" id="NP_177443.1">
    <property type="nucleotide sequence ID" value="NM_105958.3"/>
</dbReference>
<dbReference type="PDB" id="3KLX">
    <property type="method" value="X-ray"/>
    <property type="resolution" value="2.50 A"/>
    <property type="chains" value="A/B=1-209"/>
</dbReference>
<dbReference type="PDB" id="3OJI">
    <property type="method" value="X-ray"/>
    <property type="resolution" value="1.84 A"/>
    <property type="chains" value="A/B=21-209"/>
</dbReference>
<dbReference type="PDB" id="4DS8">
    <property type="method" value="X-ray"/>
    <property type="resolution" value="2.21 A"/>
    <property type="chains" value="A=1-209"/>
</dbReference>
<dbReference type="PDB" id="4DSB">
    <property type="method" value="X-ray"/>
    <property type="resolution" value="2.70 A"/>
    <property type="chains" value="A/B=24-209"/>
</dbReference>
<dbReference type="PDB" id="4DSC">
    <property type="method" value="X-ray"/>
    <property type="resolution" value="1.95 A"/>
    <property type="chains" value="A/B=25-209"/>
</dbReference>
<dbReference type="PDB" id="4JDA">
    <property type="method" value="X-ray"/>
    <property type="resolution" value="2.65 A"/>
    <property type="chains" value="A/B/C/D=21-209"/>
</dbReference>
<dbReference type="PDB" id="5JO1">
    <property type="method" value="X-ray"/>
    <property type="resolution" value="2.30 A"/>
    <property type="chains" value="A=24-205"/>
</dbReference>
<dbReference type="PDB" id="5JO2">
    <property type="method" value="X-ray"/>
    <property type="resolution" value="2.42 A"/>
    <property type="chains" value="A=24-205"/>
</dbReference>
<dbReference type="PDBsum" id="3KLX"/>
<dbReference type="PDBsum" id="3OJI"/>
<dbReference type="PDBsum" id="4DS8"/>
<dbReference type="PDBsum" id="4DSB"/>
<dbReference type="PDBsum" id="4DSC"/>
<dbReference type="PDBsum" id="4JDA"/>
<dbReference type="PDBsum" id="5JO1"/>
<dbReference type="PDBsum" id="5JO2"/>
<dbReference type="SMR" id="Q9SSM7"/>
<dbReference type="BioGRID" id="28850">
    <property type="interactions" value="9"/>
</dbReference>
<dbReference type="ComplexPortal" id="CPX-3563">
    <property type="entry name" value="PYL3 ABA receptor complex"/>
</dbReference>
<dbReference type="DIP" id="DIP-53477N"/>
<dbReference type="FunCoup" id="Q9SSM7">
    <property type="interactions" value="364"/>
</dbReference>
<dbReference type="IntAct" id="Q9SSM7">
    <property type="interactions" value="17"/>
</dbReference>
<dbReference type="STRING" id="3702.Q9SSM7"/>
<dbReference type="PaxDb" id="3702-AT1G73000.1"/>
<dbReference type="ProteomicsDB" id="226010"/>
<dbReference type="EnsemblPlants" id="AT1G73000.1">
    <property type="protein sequence ID" value="AT1G73000.1"/>
    <property type="gene ID" value="AT1G73000"/>
</dbReference>
<dbReference type="GeneID" id="843631"/>
<dbReference type="Gramene" id="AT1G73000.1">
    <property type="protein sequence ID" value="AT1G73000.1"/>
    <property type="gene ID" value="AT1G73000"/>
</dbReference>
<dbReference type="KEGG" id="ath:AT1G73000"/>
<dbReference type="Araport" id="AT1G73000"/>
<dbReference type="TAIR" id="AT1G73000">
    <property type="gene designation" value="PYL3"/>
</dbReference>
<dbReference type="eggNOG" id="ENOG502QU62">
    <property type="taxonomic scope" value="Eukaryota"/>
</dbReference>
<dbReference type="HOGENOM" id="CLU_077517_0_1_1"/>
<dbReference type="InParanoid" id="Q9SSM7"/>
<dbReference type="OMA" id="PIIRTHH"/>
<dbReference type="OrthoDB" id="4436220at2759"/>
<dbReference type="PhylomeDB" id="Q9SSM7"/>
<dbReference type="EvolutionaryTrace" id="Q9SSM7"/>
<dbReference type="PRO" id="PR:Q9SSM7"/>
<dbReference type="Proteomes" id="UP000006548">
    <property type="component" value="Chromosome 1"/>
</dbReference>
<dbReference type="ExpressionAtlas" id="Q9SSM7">
    <property type="expression patterns" value="baseline and differential"/>
</dbReference>
<dbReference type="GO" id="GO:0005737">
    <property type="term" value="C:cytoplasm"/>
    <property type="evidence" value="ECO:0000250"/>
    <property type="project" value="UniProtKB"/>
</dbReference>
<dbReference type="GO" id="GO:0005634">
    <property type="term" value="C:nucleus"/>
    <property type="evidence" value="ECO:0000250"/>
    <property type="project" value="UniProtKB"/>
</dbReference>
<dbReference type="GO" id="GO:0005886">
    <property type="term" value="C:plasma membrane"/>
    <property type="evidence" value="ECO:0007669"/>
    <property type="project" value="UniProtKB-SubCell"/>
</dbReference>
<dbReference type="GO" id="GO:0062049">
    <property type="term" value="C:protein phosphatase inhibitor complex"/>
    <property type="evidence" value="ECO:0000353"/>
    <property type="project" value="ComplexPortal"/>
</dbReference>
<dbReference type="GO" id="GO:0010427">
    <property type="term" value="F:abscisic acid binding"/>
    <property type="evidence" value="ECO:0000314"/>
    <property type="project" value="UniProtKB"/>
</dbReference>
<dbReference type="GO" id="GO:0042802">
    <property type="term" value="F:identical protein binding"/>
    <property type="evidence" value="ECO:0000353"/>
    <property type="project" value="IntAct"/>
</dbReference>
<dbReference type="GO" id="GO:0042803">
    <property type="term" value="F:protein homodimerization activity"/>
    <property type="evidence" value="ECO:0000314"/>
    <property type="project" value="UniProtKB"/>
</dbReference>
<dbReference type="GO" id="GO:0004864">
    <property type="term" value="F:protein phosphatase inhibitor activity"/>
    <property type="evidence" value="ECO:0000314"/>
    <property type="project" value="UniProtKB"/>
</dbReference>
<dbReference type="GO" id="GO:0038023">
    <property type="term" value="F:signaling receptor activity"/>
    <property type="evidence" value="ECO:0000250"/>
    <property type="project" value="UniProtKB"/>
</dbReference>
<dbReference type="GO" id="GO:0009738">
    <property type="term" value="P:abscisic acid-activated signaling pathway"/>
    <property type="evidence" value="ECO:0000314"/>
    <property type="project" value="UniProtKB"/>
</dbReference>
<dbReference type="CDD" id="cd07821">
    <property type="entry name" value="PYR_PYL_RCAR_like"/>
    <property type="match status" value="1"/>
</dbReference>
<dbReference type="FunFam" id="3.30.530.20:FF:000080">
    <property type="entry name" value="Abscisic acid receptor PYL3"/>
    <property type="match status" value="1"/>
</dbReference>
<dbReference type="Gene3D" id="3.30.530.20">
    <property type="match status" value="1"/>
</dbReference>
<dbReference type="InterPro" id="IPR050279">
    <property type="entry name" value="Plant_def-hormone_signal"/>
</dbReference>
<dbReference type="InterPro" id="IPR019587">
    <property type="entry name" value="Polyketide_cyclase/dehydratase"/>
</dbReference>
<dbReference type="InterPro" id="IPR023393">
    <property type="entry name" value="START-like_dom_sf"/>
</dbReference>
<dbReference type="PANTHER" id="PTHR31213:SF69">
    <property type="entry name" value="ABSCISIC ACID RECEPTOR PYL3"/>
    <property type="match status" value="1"/>
</dbReference>
<dbReference type="PANTHER" id="PTHR31213">
    <property type="entry name" value="OS08G0374000 PROTEIN-RELATED"/>
    <property type="match status" value="1"/>
</dbReference>
<dbReference type="Pfam" id="PF10604">
    <property type="entry name" value="Polyketide_cyc2"/>
    <property type="match status" value="1"/>
</dbReference>
<dbReference type="SUPFAM" id="SSF55961">
    <property type="entry name" value="Bet v1-like"/>
    <property type="match status" value="1"/>
</dbReference>
<accession>Q9SSM7</accession>
<accession>Q5XVG2</accession>
<feature type="chain" id="PRO_0000391738" description="Abscisic acid receptor PYL3">
    <location>
        <begin position="1"/>
        <end position="209"/>
    </location>
</feature>
<feature type="region of interest" description="Disordered" evidence="7">
    <location>
        <begin position="1"/>
        <end position="23"/>
    </location>
</feature>
<feature type="region of interest" description="START-like">
    <location>
        <begin position="43"/>
        <end position="205"/>
    </location>
</feature>
<feature type="short sequence motif" description="Gate loop" evidence="5">
    <location>
        <begin position="109"/>
        <end position="113"/>
    </location>
</feature>
<feature type="short sequence motif" description="Latch loop" evidence="5">
    <location>
        <begin position="139"/>
        <end position="141"/>
    </location>
</feature>
<feature type="compositionally biased region" description="Low complexity" evidence="7">
    <location>
        <begin position="10"/>
        <end position="21"/>
    </location>
</feature>
<feature type="binding site" evidence="11 12 14 15 16 17">
    <location>
        <position position="79"/>
    </location>
    <ligand>
        <name>abscisate</name>
        <dbReference type="ChEBI" id="CHEBI:62432"/>
    </ligand>
</feature>
<feature type="binding site" evidence="1">
    <location>
        <begin position="113"/>
        <end position="118"/>
    </location>
    <ligand>
        <name>abscisate</name>
        <dbReference type="ChEBI" id="CHEBI:62432"/>
    </ligand>
</feature>
<feature type="binding site" evidence="11 16">
    <location>
        <begin position="140"/>
        <end position="146"/>
    </location>
    <ligand>
        <name>abscisate</name>
        <dbReference type="ChEBI" id="CHEBI:62432"/>
    </ligand>
</feature>
<feature type="binding site" evidence="1">
    <location>
        <position position="170"/>
    </location>
    <ligand>
        <name>abscisate</name>
        <dbReference type="ChEBI" id="CHEBI:62432"/>
    </ligand>
</feature>
<feature type="site" description="Involved in interactions with PP2Cs" evidence="1">
    <location>
        <position position="112"/>
    </location>
</feature>
<feature type="site" description="Involved in interactions with PP2Cs" evidence="1">
    <location>
        <position position="181"/>
    </location>
</feature>
<feature type="site" description="Involved in ABA binding" evidence="4">
    <location>
        <position position="189"/>
    </location>
</feature>
<feature type="site" description="Involved in the cis- to trans-homodimer conformation in the presence of ABA" evidence="11">
    <location>
        <position position="195"/>
    </location>
</feature>
<feature type="mutagenesis site" description="Impaired HAB1-binding and lost HAB1-inhibition in the presence of (-)-ABA, but normal HAB1-inhibition in the presence of (+)-ABA." evidence="12">
    <original>K</original>
    <variation>A</variation>
    <location>
        <position position="79"/>
    </location>
</feature>
<feature type="mutagenesis site" description="Impaired HAB1-binding and lost HAB1-inhibition in the presence of (-)-ABA, but normal HAB1-inhibition in the presence of (+)-ABA. Impaired trans-homodimerization; when associated with A-202 and A-203." evidence="11 12">
    <original>F</original>
    <variation>A</variation>
    <location>
        <position position="81"/>
    </location>
</feature>
<feature type="mutagenesis site" description="Increased PP2C inhibitory activity in the presence of (+)-ABA but reduced PP2C inhibitory activity in the presence of (-)-ABA." evidence="11 12">
    <original>V</original>
    <variation>I</variation>
    <location>
        <position position="134"/>
    </location>
</feature>
<feature type="mutagenesis site" description="Impaired HAB1-binding and lost HAB1-inhibition in the presence of (-)-ABA, but normal HAB1-inhibition in the presence of (+)-ABA." evidence="12">
    <original>H</original>
    <variation>A</variation>
    <location>
        <position position="139"/>
    </location>
</feature>
<feature type="mutagenesis site" description="Impaired HAB1-binding and lost HAB1-inhibition in the presence of (-)-ABA, but normal HAB1-inhibition in the presence of (+)-ABA." evidence="12">
    <original>Y</original>
    <variation>A</variation>
    <location>
        <position position="144"/>
    </location>
</feature>
<feature type="mutagenesis site" description="Formation of trans-homodimer only in the presence of ABA under non-reducing conditions with disulfide bond formation; when associated with C-209." evidence="11">
    <original>N</original>
    <variation>C</variation>
    <location>
        <position position="180"/>
    </location>
</feature>
<feature type="mutagenesis site" description="Impaired HAB1-binding and lost HAB1-inhibition in the presence of (-)-ABA, but normal HAB1-inhibition in the presence of (+)-ABA." evidence="12">
    <original>F</original>
    <variation>A</variation>
    <location>
        <position position="188"/>
    </location>
</feature>
<feature type="mutagenesis site" description="Impaired HAB1-binding and lost HAB1-inhibition in the presence of (-)-ABA, but normal HAB1-inhibition in the presence of (+)-ABA." evidence="12">
    <original>VV</original>
    <variation>AA</variation>
    <location>
        <begin position="192"/>
        <end position="193"/>
    </location>
</feature>
<feature type="mutagenesis site" description="Reduced PP2C inhibitory activity (-)-ABA." evidence="12">
    <original>V</original>
    <variation>L</variation>
    <location>
        <position position="192"/>
    </location>
</feature>
<feature type="mutagenesis site" description="Maintenance of cis-homodimer in the presence of ABA." evidence="11">
    <original>S</original>
    <variation>L</variation>
    <location>
        <position position="195"/>
    </location>
</feature>
<feature type="mutagenesis site" description="Impaired trans-homodimerization; when associated with A-81 and A-203." evidence="11">
    <original>V</original>
    <variation>AA</variation>
    <location>
        <position position="202"/>
    </location>
</feature>
<feature type="mutagenesis site" description="Impaired trans-homodimerization; when associated with A-81 and A-202." evidence="11">
    <original>I</original>
    <variation>AA</variation>
    <location>
        <position position="203"/>
    </location>
</feature>
<feature type="mutagenesis site" description="Formation of trans-homodimer only in the presence of ABA under non-reducing conditions with disulfide bond formation; when associated with C-180." evidence="11">
    <original>T</original>
    <variation>C</variation>
    <location>
        <position position="209"/>
    </location>
</feature>
<feature type="helix" evidence="18">
    <location>
        <begin position="22"/>
        <end position="24"/>
    </location>
</feature>
<feature type="helix" evidence="19">
    <location>
        <begin position="27"/>
        <end position="40"/>
    </location>
</feature>
<feature type="strand" evidence="19">
    <location>
        <begin position="49"/>
        <end position="60"/>
    </location>
</feature>
<feature type="helix" evidence="19">
    <location>
        <begin position="62"/>
        <end position="69"/>
    </location>
</feature>
<feature type="helix" evidence="19">
    <location>
        <begin position="75"/>
        <end position="77"/>
    </location>
</feature>
<feature type="strand" evidence="19">
    <location>
        <begin position="82"/>
        <end position="87"/>
    </location>
</feature>
<feature type="strand" evidence="19">
    <location>
        <begin position="102"/>
        <end position="107"/>
    </location>
</feature>
<feature type="strand" evidence="19">
    <location>
        <begin position="109"/>
        <end position="124"/>
    </location>
</feature>
<feature type="turn" evidence="19">
    <location>
        <begin position="125"/>
        <end position="128"/>
    </location>
</feature>
<feature type="strand" evidence="19">
    <location>
        <begin position="129"/>
        <end position="136"/>
    </location>
</feature>
<feature type="strand" evidence="19">
    <location>
        <begin position="138"/>
        <end position="141"/>
    </location>
</feature>
<feature type="strand" evidence="19">
    <location>
        <begin position="145"/>
        <end position="156"/>
    </location>
</feature>
<feature type="turn" evidence="20">
    <location>
        <begin position="158"/>
        <end position="160"/>
    </location>
</feature>
<feature type="strand" evidence="19">
    <location>
        <begin position="162"/>
        <end position="175"/>
    </location>
</feature>
<feature type="helix" evidence="19">
    <location>
        <begin position="182"/>
        <end position="205"/>
    </location>
</feature>
<gene>
    <name type="primary">PYL3</name>
    <name type="synonym">RCAR13</name>
    <name type="ordered locus">At1g73000</name>
    <name type="ORF">F3N23.20</name>
</gene>
<reference key="1">
    <citation type="journal article" date="2000" name="Nature">
        <title>Sequence and analysis of chromosome 1 of the plant Arabidopsis thaliana.</title>
        <authorList>
            <person name="Theologis A."/>
            <person name="Ecker J.R."/>
            <person name="Palm C.J."/>
            <person name="Federspiel N.A."/>
            <person name="Kaul S."/>
            <person name="White O."/>
            <person name="Alonso J."/>
            <person name="Altafi H."/>
            <person name="Araujo R."/>
            <person name="Bowman C.L."/>
            <person name="Brooks S.Y."/>
            <person name="Buehler E."/>
            <person name="Chan A."/>
            <person name="Chao Q."/>
            <person name="Chen H."/>
            <person name="Cheuk R.F."/>
            <person name="Chin C.W."/>
            <person name="Chung M.K."/>
            <person name="Conn L."/>
            <person name="Conway A.B."/>
            <person name="Conway A.R."/>
            <person name="Creasy T.H."/>
            <person name="Dewar K."/>
            <person name="Dunn P."/>
            <person name="Etgu P."/>
            <person name="Feldblyum T.V."/>
            <person name="Feng J.-D."/>
            <person name="Fong B."/>
            <person name="Fujii C.Y."/>
            <person name="Gill J.E."/>
            <person name="Goldsmith A.D."/>
            <person name="Haas B."/>
            <person name="Hansen N.F."/>
            <person name="Hughes B."/>
            <person name="Huizar L."/>
            <person name="Hunter J.L."/>
            <person name="Jenkins J."/>
            <person name="Johnson-Hopson C."/>
            <person name="Khan S."/>
            <person name="Khaykin E."/>
            <person name="Kim C.J."/>
            <person name="Koo H.L."/>
            <person name="Kremenetskaia I."/>
            <person name="Kurtz D.B."/>
            <person name="Kwan A."/>
            <person name="Lam B."/>
            <person name="Langin-Hooper S."/>
            <person name="Lee A."/>
            <person name="Lee J.M."/>
            <person name="Lenz C.A."/>
            <person name="Li J.H."/>
            <person name="Li Y.-P."/>
            <person name="Lin X."/>
            <person name="Liu S.X."/>
            <person name="Liu Z.A."/>
            <person name="Luros J.S."/>
            <person name="Maiti R."/>
            <person name="Marziali A."/>
            <person name="Militscher J."/>
            <person name="Miranda M."/>
            <person name="Nguyen M."/>
            <person name="Nierman W.C."/>
            <person name="Osborne B.I."/>
            <person name="Pai G."/>
            <person name="Peterson J."/>
            <person name="Pham P.K."/>
            <person name="Rizzo M."/>
            <person name="Rooney T."/>
            <person name="Rowley D."/>
            <person name="Sakano H."/>
            <person name="Salzberg S.L."/>
            <person name="Schwartz J.R."/>
            <person name="Shinn P."/>
            <person name="Southwick A.M."/>
            <person name="Sun H."/>
            <person name="Tallon L.J."/>
            <person name="Tambunga G."/>
            <person name="Toriumi M.J."/>
            <person name="Town C.D."/>
            <person name="Utterback T."/>
            <person name="Van Aken S."/>
            <person name="Vaysberg M."/>
            <person name="Vysotskaia V.S."/>
            <person name="Walker M."/>
            <person name="Wu D."/>
            <person name="Yu G."/>
            <person name="Fraser C.M."/>
            <person name="Venter J.C."/>
            <person name="Davis R.W."/>
        </authorList>
    </citation>
    <scope>NUCLEOTIDE SEQUENCE [LARGE SCALE GENOMIC DNA]</scope>
    <source>
        <strain>cv. Columbia</strain>
    </source>
</reference>
<reference key="2">
    <citation type="journal article" date="2017" name="Plant J.">
        <title>Araport11: a complete reannotation of the Arabidopsis thaliana reference genome.</title>
        <authorList>
            <person name="Cheng C.Y."/>
            <person name="Krishnakumar V."/>
            <person name="Chan A.P."/>
            <person name="Thibaud-Nissen F."/>
            <person name="Schobel S."/>
            <person name="Town C.D."/>
        </authorList>
    </citation>
    <scope>GENOME REANNOTATION</scope>
    <source>
        <strain>cv. Columbia</strain>
    </source>
</reference>
<reference key="3">
    <citation type="submission" date="2005-02" db="EMBL/GenBank/DDBJ databases">
        <authorList>
            <person name="Underwood B.A."/>
            <person name="Xiao Y.-L."/>
            <person name="Moskal W.A. Jr."/>
            <person name="Monaghan E.L."/>
            <person name="Wang W."/>
            <person name="Redman J.C."/>
            <person name="Wu H.C."/>
            <person name="Utterback T."/>
            <person name="Town C.D."/>
        </authorList>
    </citation>
    <scope>NUCLEOTIDE SEQUENCE [LARGE SCALE GENOMIC DNA]</scope>
    <source>
        <strain>cv. Columbia</strain>
    </source>
</reference>
<reference key="4">
    <citation type="journal article" date="2002" name="Plant Physiol.">
        <title>Cloning and sequencing of cDNAs for hypothetical genes from chromosome 2 of Arabidopsis.</title>
        <authorList>
            <person name="Xiao Y.-L."/>
            <person name="Malik M."/>
            <person name="Whitelaw C.A."/>
            <person name="Town C.D."/>
        </authorList>
    </citation>
    <scope>NUCLEOTIDE SEQUENCE [LARGE SCALE MRNA]</scope>
    <source>
        <strain>cv. Columbia</strain>
    </source>
</reference>
<reference key="5">
    <citation type="journal article" date="2009" name="Nature">
        <title>A gate-latch-lock mechanism for hormone signalling by abscisic acid receptors.</title>
        <authorList>
            <person name="Melcher K."/>
            <person name="Ng L.-M."/>
            <person name="Zhou X.E."/>
            <person name="Soon F.-F."/>
            <person name="Xu Y."/>
            <person name="Suino-Powell K.M."/>
            <person name="Park S.-Y."/>
            <person name="Weiner J.J."/>
            <person name="Fujii H."/>
            <person name="Chinnusamy V."/>
            <person name="Kovach A."/>
            <person name="Li J."/>
            <person name="Wang Y."/>
            <person name="Li J."/>
            <person name="Peterson F.C."/>
            <person name="Jensen D.R."/>
            <person name="Yong E.-L."/>
            <person name="Volkman B.F."/>
            <person name="Cutler S.R."/>
            <person name="Zhu J.-K."/>
            <person name="Xu H.E."/>
        </authorList>
    </citation>
    <scope>INTERACTION WITH HAB1; ABI1 AND ABI2</scope>
</reference>
<reference key="6">
    <citation type="journal article" date="2009" name="Science">
        <title>Regulators of PP2C phosphatase activity function as abscisic acid sensors.</title>
        <authorList>
            <person name="Ma Y."/>
            <person name="Szostkiewicz I."/>
            <person name="Korte A."/>
            <person name="Moes D."/>
            <person name="Yang Y."/>
            <person name="Christmann A."/>
            <person name="Grill E."/>
        </authorList>
    </citation>
    <scope>GENE FAMILY</scope>
</reference>
<reference key="7">
    <citation type="journal article" date="2009" name="Science">
        <title>Abscisic acid inhibits type 2C protein phosphatases via the PYR/PYL family of START proteins.</title>
        <authorList>
            <person name="Park S.-Y."/>
            <person name="Fung P."/>
            <person name="Nishimura N."/>
            <person name="Jensen D.R."/>
            <person name="Fujii H."/>
            <person name="Zhao Y."/>
            <person name="Lumba S."/>
            <person name="Santiago J."/>
            <person name="Rodrigues A."/>
            <person name="Chow T.F."/>
            <person name="Alfred S.E."/>
            <person name="Bonetta D."/>
            <person name="Finkelstein R."/>
            <person name="Provart N.J."/>
            <person name="Desveaux D."/>
            <person name="Rodriguez P.L."/>
            <person name="McCourt P."/>
            <person name="Zhu J.-K."/>
            <person name="Schroeder J.I."/>
            <person name="Volkman B.F."/>
            <person name="Cutler S.R."/>
        </authorList>
    </citation>
    <scope>INTERACTION WITH HAB1</scope>
    <scope>GENE FAMILY</scope>
    <scope>NOMENCLATURE</scope>
</reference>
<reference key="8">
    <citation type="journal article" date="2011" name="Mol. Cell">
        <title>The molecular basis of ABA-independent inhibition of PP2Cs by a subclass of PYL proteins.</title>
        <authorList>
            <person name="Hao Q."/>
            <person name="Yin P."/>
            <person name="Li W."/>
            <person name="Wang L."/>
            <person name="Yan C."/>
            <person name="Lin Z."/>
            <person name="Wu J.Z."/>
            <person name="Wang J."/>
            <person name="Yan S.F."/>
            <person name="Yan N."/>
        </authorList>
    </citation>
    <scope>FUNCTION</scope>
    <scope>MONOMER AND HOMODIMER</scope>
    <scope>GENE FAMILY</scope>
</reference>
<reference key="9">
    <citation type="journal article" date="2012" name="Structure">
        <title>Complex structures of the abscisic acid receptor PYL3/RCAR13 reveal a unique regulatory mechanism.</title>
        <authorList>
            <person name="Zhang X."/>
            <person name="Zhang Q."/>
            <person name="Xin Q."/>
            <person name="Yu L."/>
            <person name="Wang Z."/>
            <person name="Wu W."/>
            <person name="Jiang L."/>
            <person name="Wang G."/>
            <person name="Tian W."/>
            <person name="Deng Z."/>
            <person name="Wang Y."/>
            <person name="Liu Z."/>
            <person name="Long J."/>
            <person name="Gong Z."/>
            <person name="Chen Z."/>
        </authorList>
    </citation>
    <scope>X-RAY CRYSTALLOGRAPHY (1.84 ANGSTROMS) OF 21-209 IN COMPLEX WITH ABA</scope>
    <scope>FUNCTION</scope>
    <scope>MUTAGENESIS OF PHE-81; VAL-134; ASN-180; SER-195; VAL-202; ILE-203 AND THR-209</scope>
    <scope>INTERACTION WITH HAB1</scope>
    <scope>INHIBITION BY PYRABACTIN</scope>
</reference>
<reference key="10">
    <citation type="journal article" date="2013" name="PLoS ONE">
        <title>Structural insights into the abscisic acid stereospecificity by the ABA receptors PYR/PYL/RCAR.</title>
        <authorList>
            <person name="Zhang X."/>
            <person name="Jiang L."/>
            <person name="Wang G."/>
            <person name="Yu L."/>
            <person name="Zhang Q."/>
            <person name="Xin Q."/>
            <person name="Wu W."/>
            <person name="Gong Z."/>
            <person name="Chen Z."/>
        </authorList>
    </citation>
    <scope>X-RAY CRYSTALLOGRAPHY (2.65 ANGSTROMS) OF 21-209 IN COMPLEX WITH ABA</scope>
    <scope>FUNCTION</scope>
    <scope>MUTAGENESIS OF LYS-79; PHE-81; VAL-134; HIS-139; TYR-144; PHE-188; VAL-192 AND 192-VAL-VAL-193</scope>
    <scope>INTERACTION WITH ABA AND HAB1</scope>
    <scope>GENE FAMILY</scope>
</reference>